<accession>P38487</accession>
<keyword id="KW-0903">Direct protein sequencing</keyword>
<keyword id="KW-0378">Hydrolase</keyword>
<feature type="initiator methionine" description="Removed" evidence="2">
    <location>
        <position position="1"/>
    </location>
</feature>
<feature type="chain" id="PRO_0000079338" description="Creatinase">
    <location>
        <begin position="2"/>
        <end position="411"/>
    </location>
</feature>
<feature type="active site" evidence="1">
    <location>
        <position position="240"/>
    </location>
</feature>
<evidence type="ECO:0000250" key="1"/>
<evidence type="ECO:0000269" key="2">
    <source ref="1"/>
</evidence>
<evidence type="ECO:0000305" key="3"/>
<sequence length="411" mass="46949">MQQITDLERTKILQNGGEKVKPTFSKEEMTRRNTRLREYMAKAGIDAVMFTSYHNINYYSDFLYTSFNRSYALVVTQDKHVTVSANIDAGMPWRRSFDENIVYTDWKRDNFLYAVKKVLNEGGFSSGRLGVENDHMTLDLRRQVQDALPNTELVDVSQAVMGHRMFKSDEEIDLIKNGARIADIGGAAVVEAIREGVPEYEVALHGTEAMVREIARTYPHAELRDTWIWFQSGINTDGAHNWATSRKLQRGDILSLNCFPMIAGYYTALERTLFLEEVSDRHLELWEINCKVHRRGLELIKPGARCMDIAAELNEIYREHDLLANRTFGYGHSFGVLSHYYGREAGLELREDIETVLEPGMVVSMEPMIMIPEGEPGAGGYREHDILVISENGTENITKFPFGPEHNIIKK</sequence>
<name>CREA_BACB0</name>
<dbReference type="EC" id="3.5.3.3"/>
<dbReference type="EMBL" id="D14463">
    <property type="protein sequence ID" value="BAA03358.1"/>
    <property type="molecule type" value="Genomic_DNA"/>
</dbReference>
<dbReference type="PIR" id="I39809">
    <property type="entry name" value="I39809"/>
</dbReference>
<dbReference type="SMR" id="P38487"/>
<dbReference type="GO" id="GO:0016980">
    <property type="term" value="F:creatinase activity"/>
    <property type="evidence" value="ECO:0007669"/>
    <property type="project" value="UniProtKB-EC"/>
</dbReference>
<dbReference type="CDD" id="cd01090">
    <property type="entry name" value="Creatinase"/>
    <property type="match status" value="1"/>
</dbReference>
<dbReference type="Gene3D" id="3.90.230.10">
    <property type="entry name" value="Creatinase/methionine aminopeptidase superfamily"/>
    <property type="match status" value="1"/>
</dbReference>
<dbReference type="Gene3D" id="3.40.350.10">
    <property type="entry name" value="Creatinase/prolidase N-terminal domain"/>
    <property type="match status" value="1"/>
</dbReference>
<dbReference type="InterPro" id="IPR029149">
    <property type="entry name" value="Creatin/AminoP/Spt16_N"/>
</dbReference>
<dbReference type="InterPro" id="IPR036005">
    <property type="entry name" value="Creatinase/aminopeptidase-like"/>
</dbReference>
<dbReference type="InterPro" id="IPR039394">
    <property type="entry name" value="Creatinase_C"/>
</dbReference>
<dbReference type="InterPro" id="IPR000587">
    <property type="entry name" value="Creatinase_N"/>
</dbReference>
<dbReference type="InterPro" id="IPR000994">
    <property type="entry name" value="Pept_M24"/>
</dbReference>
<dbReference type="InterPro" id="IPR050659">
    <property type="entry name" value="Peptidase_M24B"/>
</dbReference>
<dbReference type="PANTHER" id="PTHR46112">
    <property type="entry name" value="AMINOPEPTIDASE"/>
    <property type="match status" value="1"/>
</dbReference>
<dbReference type="PANTHER" id="PTHR46112:SF2">
    <property type="entry name" value="XAA-PRO AMINOPEPTIDASE P-RELATED"/>
    <property type="match status" value="1"/>
</dbReference>
<dbReference type="Pfam" id="PF01321">
    <property type="entry name" value="Creatinase_N"/>
    <property type="match status" value="1"/>
</dbReference>
<dbReference type="Pfam" id="PF00557">
    <property type="entry name" value="Peptidase_M24"/>
    <property type="match status" value="1"/>
</dbReference>
<dbReference type="SUPFAM" id="SSF55920">
    <property type="entry name" value="Creatinase/aminopeptidase"/>
    <property type="match status" value="1"/>
</dbReference>
<dbReference type="SUPFAM" id="SSF53092">
    <property type="entry name" value="Creatinase/prolidase N-terminal domain"/>
    <property type="match status" value="1"/>
</dbReference>
<reference key="1">
    <citation type="journal article" date="1993" name="J. Ferment. Bioeng.">
        <title>Molecular cloning and high expression of the Bacillus creatinase gene in Escherichia coli.</title>
        <authorList>
            <person name="Suzuki K."/>
            <person name="Sagai H."/>
            <person name="Sugiyama M."/>
            <person name="Imamura S."/>
        </authorList>
    </citation>
    <scope>NUCLEOTIDE SEQUENCE [GENOMIC DNA]</scope>
    <scope>PROTEIN SEQUENCE OF 2-21</scope>
</reference>
<protein>
    <recommendedName>
        <fullName>Creatinase</fullName>
        <ecNumber>3.5.3.3</ecNumber>
    </recommendedName>
    <alternativeName>
        <fullName>Creatine amidinohydrolase</fullName>
    </alternativeName>
</protein>
<comment type="catalytic activity">
    <reaction>
        <text>creatine + H2O = sarcosine + urea</text>
        <dbReference type="Rhea" id="RHEA:22456"/>
        <dbReference type="ChEBI" id="CHEBI:15377"/>
        <dbReference type="ChEBI" id="CHEBI:16199"/>
        <dbReference type="ChEBI" id="CHEBI:57433"/>
        <dbReference type="ChEBI" id="CHEBI:57947"/>
        <dbReference type="EC" id="3.5.3.3"/>
    </reaction>
</comment>
<comment type="subunit">
    <text>Homodimer.</text>
</comment>
<comment type="induction">
    <text>By choline chloride.</text>
</comment>
<comment type="similarity">
    <text evidence="3">Belongs to the peptidase M24 family. Creatinase subfamily.</text>
</comment>
<organism>
    <name type="scientific">Bacillus sp. (strain B-0618)</name>
    <dbReference type="NCBI Taxonomy" id="69000"/>
    <lineage>
        <taxon>Bacteria</taxon>
        <taxon>Bacillati</taxon>
        <taxon>Bacillota</taxon>
        <taxon>Bacilli</taxon>
        <taxon>Bacillales</taxon>
        <taxon>Bacillaceae</taxon>
        <taxon>Bacillus</taxon>
    </lineage>
</organism>
<proteinExistence type="evidence at protein level"/>